<accession>F4IRB4</accession>
<accession>F4IRB5</accession>
<accession>O64502</accession>
<accession>Q94GA5</accession>
<reference key="1">
    <citation type="journal article" date="1998" name="Plant J.">
        <title>Towards functional characterisation of the members of the R2R3-MYB gene family from Arabidopsis thaliana.</title>
        <authorList>
            <person name="Kranz H.D."/>
            <person name="Denekamp M."/>
            <person name="Greco R."/>
            <person name="Jin H.-L."/>
            <person name="Leyva A."/>
            <person name="Meissner R.C."/>
            <person name="Petroni K."/>
            <person name="Urzainqui A."/>
            <person name="Bevan M."/>
            <person name="Martin C."/>
            <person name="Smeekens S."/>
            <person name="Tonelli C."/>
            <person name="Paz-Ares J."/>
            <person name="Weisshaar B."/>
        </authorList>
    </citation>
    <scope>NUCLEOTIDE SEQUENCE [MRNA] (ISOFORM 3)</scope>
    <scope>GENE FAMILY</scope>
    <scope>NOMENCLATURE</scope>
    <source>
        <strain>cv. Columbia</strain>
    </source>
</reference>
<reference key="2">
    <citation type="submission" date="2004-02" db="EMBL/GenBank/DDBJ databases">
        <title>The MYB transcription factor family in Arabidopsis: A genome-wide cloning and expression pattern analysis.</title>
        <authorList>
            <person name="Qu L.-J."/>
            <person name="Gu H."/>
        </authorList>
    </citation>
    <scope>NUCLEOTIDE SEQUENCE [MRNA] (ISOFORM 3)</scope>
</reference>
<reference key="3">
    <citation type="journal article" date="1999" name="Nature">
        <title>Sequence and analysis of chromosome 2 of the plant Arabidopsis thaliana.</title>
        <authorList>
            <person name="Lin X."/>
            <person name="Kaul S."/>
            <person name="Rounsley S.D."/>
            <person name="Shea T.P."/>
            <person name="Benito M.-I."/>
            <person name="Town C.D."/>
            <person name="Fujii C.Y."/>
            <person name="Mason T.M."/>
            <person name="Bowman C.L."/>
            <person name="Barnstead M.E."/>
            <person name="Feldblyum T.V."/>
            <person name="Buell C.R."/>
            <person name="Ketchum K.A."/>
            <person name="Lee J.J."/>
            <person name="Ronning C.M."/>
            <person name="Koo H.L."/>
            <person name="Moffat K.S."/>
            <person name="Cronin L.A."/>
            <person name="Shen M."/>
            <person name="Pai G."/>
            <person name="Van Aken S."/>
            <person name="Umayam L."/>
            <person name="Tallon L.J."/>
            <person name="Gill J.E."/>
            <person name="Adams M.D."/>
            <person name="Carrera A.J."/>
            <person name="Creasy T.H."/>
            <person name="Goodman H.M."/>
            <person name="Somerville C.R."/>
            <person name="Copenhaver G.P."/>
            <person name="Preuss D."/>
            <person name="Nierman W.C."/>
            <person name="White O."/>
            <person name="Eisen J.A."/>
            <person name="Salzberg S.L."/>
            <person name="Fraser C.M."/>
            <person name="Venter J.C."/>
        </authorList>
    </citation>
    <scope>NUCLEOTIDE SEQUENCE [LARGE SCALE GENOMIC DNA]</scope>
    <source>
        <strain>cv. Columbia</strain>
    </source>
</reference>
<reference key="4">
    <citation type="journal article" date="2017" name="Plant J.">
        <title>Araport11: a complete reannotation of the Arabidopsis thaliana reference genome.</title>
        <authorList>
            <person name="Cheng C.Y."/>
            <person name="Krishnakumar V."/>
            <person name="Chan A.P."/>
            <person name="Thibaud-Nissen F."/>
            <person name="Schobel S."/>
            <person name="Town C.D."/>
        </authorList>
    </citation>
    <scope>GENOME REANNOTATION</scope>
    <source>
        <strain>cv. Columbia</strain>
    </source>
</reference>
<reference key="5">
    <citation type="submission" date="2006-08" db="EMBL/GenBank/DDBJ databases">
        <title>Arabidopsis ORF clones.</title>
        <authorList>
            <person name="Bautista V.R."/>
            <person name="Kim C.J."/>
            <person name="Chen H."/>
            <person name="Quinitio C."/>
            <person name="Ecker J.R."/>
        </authorList>
    </citation>
    <scope>NUCLEOTIDE SEQUENCE [LARGE SCALE MRNA] (ISOFORM 3)</scope>
    <source>
        <strain>cv. Columbia</strain>
    </source>
</reference>
<reference key="6">
    <citation type="journal article" date="2001" name="Curr. Opin. Plant Biol.">
        <title>The R2R3-MYB gene family in Arabidopsis thaliana.</title>
        <authorList>
            <person name="Stracke R."/>
            <person name="Werber M."/>
            <person name="Weisshaar B."/>
        </authorList>
    </citation>
    <scope>GENE FAMILY</scope>
    <scope>NOMENCLATURE</scope>
    <source>
        <strain>cv. Columbia</strain>
    </source>
</reference>
<reference key="7">
    <citation type="journal article" date="2005" name="Plant Cell">
        <title>The Arabidopsis R2R3 MYB proteins FOUR LIPS and MYB88 restrict divisions late in the stomatal cell lineage.</title>
        <authorList>
            <person name="Lai L.B."/>
            <person name="Nadeau J.A."/>
            <person name="Lucas J."/>
            <person name="Lee E.-K."/>
            <person name="Nakagawa T."/>
            <person name="Zhao L."/>
            <person name="Geisler M."/>
            <person name="Sack F.D."/>
        </authorList>
    </citation>
    <scope>FUNCTION</scope>
    <scope>DISRUPTION PHENOTYPE</scope>
    <scope>TISSUE SPECIFICITY</scope>
    <source>
        <strain>cv. Columbia</strain>
    </source>
</reference>
<reference key="8">
    <citation type="journal article" date="2010" name="Plant Cell">
        <title>Regulation of cell proliferation in the stomatal lineage by the Arabidopsis MYB FOUR LIPS via direct targeting of core cell cycle genes.</title>
        <authorList>
            <person name="Xie Z."/>
            <person name="Lee E."/>
            <person name="Lucas J.R."/>
            <person name="Morohashi K."/>
            <person name="Li D."/>
            <person name="Murray J.A."/>
            <person name="Sack F.D."/>
            <person name="Grotewold E."/>
        </authorList>
    </citation>
    <scope>FUNCTION</scope>
    <scope>SUBCELLULAR LOCATION</scope>
    <source>
        <strain>cv. Columbia</strain>
    </source>
</reference>
<reference key="9">
    <citation type="journal article" date="2010" name="Plant J.">
        <title>Role of the stomatal development regulators FLP/MYB88 in abiotic stress responses.</title>
        <authorList>
            <person name="Xie Z."/>
            <person name="Li D."/>
            <person name="Wang L."/>
            <person name="Sack F.D."/>
            <person name="Grotewold E."/>
        </authorList>
    </citation>
    <scope>FUNCTION</scope>
    <scope>DISRUPTION PHENOTYPE</scope>
</reference>
<reference key="10">
    <citation type="journal article" date="2011" name="EMBO J.">
        <title>Developmental regulation of CYCA2s contributes to tissue-specific proliferation in Arabidopsis.</title>
        <authorList>
            <person name="Vanneste S."/>
            <person name="Coppens F."/>
            <person name="Lee E."/>
            <person name="Donner T.J."/>
            <person name="Xie Z."/>
            <person name="Van Isterdael G."/>
            <person name="Dhondt S."/>
            <person name="De Winter F."/>
            <person name="De Rybel B."/>
            <person name="Vuylsteke M."/>
            <person name="De Veylder L."/>
            <person name="Friml J."/>
            <person name="Inze D."/>
            <person name="Grotewold E."/>
            <person name="Scarpella E."/>
            <person name="Sack F."/>
            <person name="Beemster G.T."/>
            <person name="Beeckman T."/>
        </authorList>
    </citation>
    <scope>FUNCTION</scope>
    <scope>DISRUPTION PHENOTYPE</scope>
</reference>
<reference key="11">
    <citation type="journal article" date="2012" name="J. Exp. Bot.">
        <title>The R2R3 MYB transcription factors FOUR LIPS and MYB88 regulate female reproductive development.</title>
        <authorList>
            <person name="Makkena S."/>
            <person name="Lee E."/>
            <person name="Sack F.D."/>
            <person name="Lamb R.S."/>
        </authorList>
    </citation>
    <scope>FUNCTION</scope>
    <scope>DISRUPTION PHENOTYPE</scope>
    <scope>DEVELOPMENTAL STAGE</scope>
    <source>
        <strain>cv. Columbia</strain>
        <strain>cv. Landsberg erecta</strain>
    </source>
</reference>
<reference key="12">
    <citation type="journal article" date="2013" name="J. Exp. Bot.">
        <title>FOUR LIPS and MYB88 conditionally restrict the G1/S transition during stomatal formation.</title>
        <authorList>
            <person name="Lee E."/>
            <person name="Liu X."/>
            <person name="Eglit Y."/>
            <person name="Sack F."/>
        </authorList>
    </citation>
    <scope>FUNCTION</scope>
    <scope>DISRUPTION PHENOTYPE</scope>
    <source>
        <strain>cv. Columbia</strain>
    </source>
</reference>
<reference key="13">
    <citation type="journal article" date="2014" name="J. Exp. Bot.">
        <title>Requirement for A-type cyclin-dependent kinase and cyclins for the terminal division in the stomatal lineage of Arabidopsis.</title>
        <authorList>
            <person name="Yang K."/>
            <person name="Wang H."/>
            <person name="Xue S."/>
            <person name="Qu X."/>
            <person name="Zou J."/>
            <person name="Le J."/>
        </authorList>
    </citation>
    <scope>FUNCTION</scope>
    <scope>DISRUPTION PHENOTYPE</scope>
    <source>
        <strain>cv. Columbia</strain>
    </source>
</reference>
<reference key="14">
    <citation type="journal article" date="2014" name="Plant J.">
        <title>Deep functional redundancy between FAMA and FOUR LIPS in stomatal development.</title>
        <authorList>
            <person name="Lee E."/>
            <person name="Lucas J.R."/>
            <person name="Sack F.D."/>
        </authorList>
    </citation>
    <scope>FUNCTION</scope>
    <scope>INTERACTION WITH RBR1</scope>
    <source>
        <strain>cv. Columbia</strain>
    </source>
</reference>
<reference key="15">
    <citation type="journal article" date="2015" name="Am. J. Bot.">
        <title>The FOUR LIPS and MYB88 transcription factor genes are widely expressed in Arabidopsis thaliana during development.</title>
        <authorList>
            <person name="Lei Q."/>
            <person name="Lee E."/>
            <person name="Keerthisinghe S."/>
            <person name="Lai L."/>
            <person name="Li M."/>
            <person name="Lucas J.R."/>
            <person name="Wen X."/>
            <person name="Ren X."/>
            <person name="Sack F.D."/>
        </authorList>
    </citation>
    <scope>TISSUE SPECIFICITY</scope>
    <scope>DEVELOPMENTAL STAGE</scope>
    <source>
        <strain>cv. Columbia GL1</strain>
    </source>
</reference>
<reference key="16">
    <citation type="journal article" date="2015" name="Nat. Commun.">
        <title>A coherent transcriptional feed-forward motif model for mediating auxin-sensitive PIN3 expression during lateral root development.</title>
        <authorList>
            <person name="Chen Q."/>
            <person name="Liu Y."/>
            <person name="Maere S."/>
            <person name="Lee E."/>
            <person name="Van Isterdael G."/>
            <person name="Xie Z."/>
            <person name="Xuan W."/>
            <person name="Lucas J."/>
            <person name="Vassileva V."/>
            <person name="Kitakura S."/>
            <person name="Marhavy P."/>
            <person name="Wabnik K."/>
            <person name="Geldner N."/>
            <person name="Benkova E."/>
            <person name="Le J."/>
            <person name="Fukaki H."/>
            <person name="Grotewold E."/>
            <person name="Li C."/>
            <person name="Friml J."/>
            <person name="Sack F."/>
            <person name="Beeckman T."/>
            <person name="Vanneste S."/>
        </authorList>
    </citation>
    <scope>FUNCTION</scope>
    <scope>DISRUPTION PHENOTYPE</scope>
</reference>
<reference key="17">
    <citation type="journal article" date="2015" name="Nat. Commun.">
        <title>Transcriptional regulation of PIN genes by FOUR LIPS and MYB88 during Arabidopsis root gravitropism.</title>
        <authorList>
            <person name="Wang H.-Z."/>
            <person name="Yang K.-Z."/>
            <person name="Zou J.-J."/>
            <person name="Zhu L.-L."/>
            <person name="Xie Z.D."/>
            <person name="Morita M.T."/>
            <person name="Tasaka M."/>
            <person name="Friml J."/>
            <person name="Grotewold E."/>
            <person name="Beeckman T."/>
            <person name="Vanneste S."/>
            <person name="Sack F."/>
            <person name="Le J."/>
        </authorList>
    </citation>
    <scope>FUNCTION</scope>
    <scope>DISRUPTION PHENOTYPE</scope>
    <scope>DEVELOPMENTAL STAGE</scope>
    <source>
        <strain>cv. Columbia</strain>
        <strain>cv. Landsberg erecta</strain>
    </source>
</reference>
<feature type="chain" id="PRO_0000438721" description="Transcription factor MYB88">
    <location>
        <begin position="1"/>
        <end position="484"/>
    </location>
</feature>
<feature type="domain" description="HTH myb-type 1" evidence="1">
    <location>
        <begin position="25"/>
        <end position="76"/>
    </location>
</feature>
<feature type="domain" description="HTH myb-type 2" evidence="1">
    <location>
        <begin position="77"/>
        <end position="131"/>
    </location>
</feature>
<feature type="DNA-binding region" description="H-T-H motif" evidence="1">
    <location>
        <begin position="53"/>
        <end position="76"/>
    </location>
</feature>
<feature type="DNA-binding region" description="H-T-H motif" evidence="1">
    <location>
        <begin position="104"/>
        <end position="127"/>
    </location>
</feature>
<feature type="region of interest" description="Disordered" evidence="3">
    <location>
        <begin position="1"/>
        <end position="20"/>
    </location>
</feature>
<feature type="region of interest" description="Disordered" evidence="3">
    <location>
        <begin position="215"/>
        <end position="241"/>
    </location>
</feature>
<feature type="region of interest" description="Disordered" evidence="3">
    <location>
        <begin position="321"/>
        <end position="383"/>
    </location>
</feature>
<feature type="region of interest" description="Disordered" evidence="3">
    <location>
        <begin position="458"/>
        <end position="484"/>
    </location>
</feature>
<feature type="short sequence motif" description="Nuclear localization signal" evidence="2">
    <location>
        <begin position="13"/>
        <end position="20"/>
    </location>
</feature>
<feature type="compositionally biased region" description="Basic and acidic residues" evidence="3">
    <location>
        <begin position="232"/>
        <end position="241"/>
    </location>
</feature>
<feature type="compositionally biased region" description="Low complexity" evidence="3">
    <location>
        <begin position="339"/>
        <end position="348"/>
    </location>
</feature>
<feature type="compositionally biased region" description="Polar residues" evidence="3">
    <location>
        <begin position="354"/>
        <end position="380"/>
    </location>
</feature>
<feature type="compositionally biased region" description="Pro residues" evidence="3">
    <location>
        <begin position="463"/>
        <end position="476"/>
    </location>
</feature>
<feature type="splice variant" id="VSP_058731" description="In isoform 3.">
    <location>
        <begin position="177"/>
        <end position="484"/>
    </location>
</feature>
<feature type="splice variant" id="VSP_058732" description="In isoform 2.">
    <original>ERNFLLK</original>
    <variation>VSIHLTN</variation>
    <location>
        <begin position="449"/>
        <end position="455"/>
    </location>
</feature>
<feature type="splice variant" id="VSP_058733" description="In isoform 2.">
    <location>
        <begin position="456"/>
        <end position="484"/>
    </location>
</feature>
<feature type="sequence conflict" description="In Ref. 1; AAD53099." evidence="16" ref="1">
    <original>A</original>
    <variation>V</variation>
    <location>
        <position position="165"/>
    </location>
</feature>
<sequence>MEETTKQNNMKKKKKILLHSDDSKKKERHIVTWSPEEDDILRKQISLQGTENWAIIASKFNDKSTRQCRRRWYTYLNSDFKRGGWSPEEDTLLCEAQRLFGNRWTEIAKVVSGRTDNAVKNRFTTLCKKRAKHEAMAKENRIACCVNSDNKRLLFPDGISTPLKAESESPLTKKMRRSHIPNLTEIKSYGDRSHIKVESTMNQQRRHPFSVVAHNATSSDGTEEQKQIGNVKESDGEDKSNQEVFLKKDDSKVTALMQQAELLSSLAQKVNADNTDQSMENAWKVLQDFLNKSKENDLFRYGIPDIDFQLDEFKDLVEDLRSSNEDSQSSWRQPDLHDSPASSEYSSGSGSGSTIMTHPSGDKTQQLMSDTQTTSHQQNGGELLQDNGIVSDATVEQVGLLSTGHDVLKNSNETVPIPGEEEFNSPVQVTPLFRSLAAGIPSPQFSESERNFLLKTLGVESPSPYPSANPSQPPPCKRVLLDSL</sequence>
<dbReference type="EMBL" id="AF175994">
    <property type="protein sequence ID" value="AAD53099.2"/>
    <property type="molecule type" value="mRNA"/>
</dbReference>
<dbReference type="EMBL" id="AY550305">
    <property type="protein sequence ID" value="AAS58516.1"/>
    <property type="molecule type" value="mRNA"/>
</dbReference>
<dbReference type="EMBL" id="AC002521">
    <property type="protein sequence ID" value="AAC05340.2"/>
    <property type="molecule type" value="Genomic_DNA"/>
</dbReference>
<dbReference type="EMBL" id="CP002685">
    <property type="protein sequence ID" value="AEC05629.1"/>
    <property type="molecule type" value="Genomic_DNA"/>
</dbReference>
<dbReference type="EMBL" id="CP002685">
    <property type="protein sequence ID" value="AEC05630.1"/>
    <property type="molecule type" value="Genomic_DNA"/>
</dbReference>
<dbReference type="EMBL" id="BT026343">
    <property type="protein sequence ID" value="ABH04450.1"/>
    <property type="molecule type" value="mRNA"/>
</dbReference>
<dbReference type="PIR" id="T00846">
    <property type="entry name" value="T00846"/>
</dbReference>
<dbReference type="RefSeq" id="NP_001030957.1">
    <molecule id="F4IRB4-1"/>
    <property type="nucleotide sequence ID" value="NM_001035880.3"/>
</dbReference>
<dbReference type="RefSeq" id="NP_565291.2">
    <molecule id="F4IRB4-2"/>
    <property type="nucleotide sequence ID" value="NM_126337.4"/>
</dbReference>
<dbReference type="SMR" id="F4IRB4"/>
<dbReference type="FunCoup" id="F4IRB4">
    <property type="interactions" value="83"/>
</dbReference>
<dbReference type="STRING" id="3702.F4IRB4"/>
<dbReference type="PaxDb" id="3702-AT2G02820.2"/>
<dbReference type="ProteomicsDB" id="251410">
    <molecule id="F4IRB4-1"/>
</dbReference>
<dbReference type="EnsemblPlants" id="AT2G02820.1">
    <molecule id="F4IRB4-2"/>
    <property type="protein sequence ID" value="AT2G02820.1"/>
    <property type="gene ID" value="AT2G02820"/>
</dbReference>
<dbReference type="EnsemblPlants" id="AT2G02820.2">
    <molecule id="F4IRB4-1"/>
    <property type="protein sequence ID" value="AT2G02820.2"/>
    <property type="gene ID" value="AT2G02820"/>
</dbReference>
<dbReference type="GeneID" id="814812"/>
<dbReference type="Gramene" id="AT2G02820.1">
    <molecule id="F4IRB4-2"/>
    <property type="protein sequence ID" value="AT2G02820.1"/>
    <property type="gene ID" value="AT2G02820"/>
</dbReference>
<dbReference type="Gramene" id="AT2G02820.2">
    <molecule id="F4IRB4-1"/>
    <property type="protein sequence ID" value="AT2G02820.2"/>
    <property type="gene ID" value="AT2G02820"/>
</dbReference>
<dbReference type="KEGG" id="ath:AT2G02820"/>
<dbReference type="Araport" id="AT2G02820"/>
<dbReference type="TAIR" id="AT2G02820">
    <property type="gene designation" value="MYB88"/>
</dbReference>
<dbReference type="eggNOG" id="KOG0048">
    <property type="taxonomic scope" value="Eukaryota"/>
</dbReference>
<dbReference type="HOGENOM" id="CLU_018700_1_0_1"/>
<dbReference type="InParanoid" id="F4IRB4"/>
<dbReference type="PhylomeDB" id="F4IRB4"/>
<dbReference type="PRO" id="PR:F4IRB4"/>
<dbReference type="Proteomes" id="UP000006548">
    <property type="component" value="Chromosome 2"/>
</dbReference>
<dbReference type="ExpressionAtlas" id="F4IRB4">
    <property type="expression patterns" value="baseline and differential"/>
</dbReference>
<dbReference type="GO" id="GO:0005634">
    <property type="term" value="C:nucleus"/>
    <property type="evidence" value="ECO:0000314"/>
    <property type="project" value="UniProtKB"/>
</dbReference>
<dbReference type="GO" id="GO:0003700">
    <property type="term" value="F:DNA-binding transcription factor activity"/>
    <property type="evidence" value="ECO:0000314"/>
    <property type="project" value="UniProtKB"/>
</dbReference>
<dbReference type="GO" id="GO:0043565">
    <property type="term" value="F:sequence-specific DNA binding"/>
    <property type="evidence" value="ECO:0000314"/>
    <property type="project" value="UniProtKB"/>
</dbReference>
<dbReference type="GO" id="GO:0009553">
    <property type="term" value="P:embryo sac development"/>
    <property type="evidence" value="ECO:0000315"/>
    <property type="project" value="TAIR"/>
</dbReference>
<dbReference type="GO" id="GO:0010052">
    <property type="term" value="P:guard cell differentiation"/>
    <property type="evidence" value="ECO:0000316"/>
    <property type="project" value="UniProtKB"/>
</dbReference>
<dbReference type="GO" id="GO:0010235">
    <property type="term" value="P:guard mother cell cytokinesis"/>
    <property type="evidence" value="ECO:0000315"/>
    <property type="project" value="UniProtKB"/>
</dbReference>
<dbReference type="GO" id="GO:0010444">
    <property type="term" value="P:guard mother cell differentiation"/>
    <property type="evidence" value="ECO:0000315"/>
    <property type="project" value="UniProtKB"/>
</dbReference>
<dbReference type="GO" id="GO:0048527">
    <property type="term" value="P:lateral root development"/>
    <property type="evidence" value="ECO:0000315"/>
    <property type="project" value="UniProtKB"/>
</dbReference>
<dbReference type="GO" id="GO:0009554">
    <property type="term" value="P:megasporogenesis"/>
    <property type="evidence" value="ECO:0000315"/>
    <property type="project" value="UniProtKB"/>
</dbReference>
<dbReference type="GO" id="GO:0050891">
    <property type="term" value="P:multicellular organismal-level water homeostasis"/>
    <property type="evidence" value="ECO:0000315"/>
    <property type="project" value="UniProtKB"/>
</dbReference>
<dbReference type="GO" id="GO:1901333">
    <property type="term" value="P:positive regulation of lateral root development"/>
    <property type="evidence" value="ECO:0000315"/>
    <property type="project" value="UniProtKB"/>
</dbReference>
<dbReference type="GO" id="GO:1901002">
    <property type="term" value="P:positive regulation of response to salt stress"/>
    <property type="evidence" value="ECO:0000315"/>
    <property type="project" value="UniProtKB"/>
</dbReference>
<dbReference type="GO" id="GO:1902584">
    <property type="term" value="P:positive regulation of response to water deprivation"/>
    <property type="evidence" value="ECO:0000315"/>
    <property type="project" value="UniProtKB"/>
</dbReference>
<dbReference type="GO" id="GO:1902806">
    <property type="term" value="P:regulation of cell cycle G1/S phase transition"/>
    <property type="evidence" value="ECO:0000315"/>
    <property type="project" value="UniProtKB"/>
</dbReference>
<dbReference type="GO" id="GO:0032875">
    <property type="term" value="P:regulation of DNA endoreduplication"/>
    <property type="evidence" value="ECO:0000315"/>
    <property type="project" value="UniProtKB"/>
</dbReference>
<dbReference type="GO" id="GO:0006355">
    <property type="term" value="P:regulation of DNA-templated transcription"/>
    <property type="evidence" value="ECO:0000314"/>
    <property type="project" value="UniProtKB"/>
</dbReference>
<dbReference type="GO" id="GO:2000037">
    <property type="term" value="P:regulation of stomatal complex patterning"/>
    <property type="evidence" value="ECO:0000315"/>
    <property type="project" value="UniProtKB"/>
</dbReference>
<dbReference type="GO" id="GO:0009737">
    <property type="term" value="P:response to abscisic acid"/>
    <property type="evidence" value="ECO:0000315"/>
    <property type="project" value="UniProtKB"/>
</dbReference>
<dbReference type="GO" id="GO:0009629">
    <property type="term" value="P:response to gravity"/>
    <property type="evidence" value="ECO:0000315"/>
    <property type="project" value="UniProtKB"/>
</dbReference>
<dbReference type="GO" id="GO:0010376">
    <property type="term" value="P:stomatal complex formation"/>
    <property type="evidence" value="ECO:0000315"/>
    <property type="project" value="UniProtKB"/>
</dbReference>
<dbReference type="CDD" id="cd00167">
    <property type="entry name" value="SANT"/>
    <property type="match status" value="2"/>
</dbReference>
<dbReference type="FunFam" id="1.10.10.60:FF:000355">
    <property type="entry name" value="Transcription factor MYB124"/>
    <property type="match status" value="1"/>
</dbReference>
<dbReference type="FunFam" id="1.10.10.60:FF:000435">
    <property type="entry name" value="Transcription factor MYB124"/>
    <property type="match status" value="1"/>
</dbReference>
<dbReference type="Gene3D" id="1.10.10.60">
    <property type="entry name" value="Homeodomain-like"/>
    <property type="match status" value="2"/>
</dbReference>
<dbReference type="InterPro" id="IPR009057">
    <property type="entry name" value="Homeodomain-like_sf"/>
</dbReference>
<dbReference type="InterPro" id="IPR017930">
    <property type="entry name" value="Myb_dom"/>
</dbReference>
<dbReference type="InterPro" id="IPR050560">
    <property type="entry name" value="MYB_TF"/>
</dbReference>
<dbReference type="InterPro" id="IPR001005">
    <property type="entry name" value="SANT/Myb"/>
</dbReference>
<dbReference type="PANTHER" id="PTHR45614">
    <property type="entry name" value="MYB PROTEIN-RELATED"/>
    <property type="match status" value="1"/>
</dbReference>
<dbReference type="PANTHER" id="PTHR45614:SF135">
    <property type="entry name" value="TRANSCRIPTION FACTOR MYB88"/>
    <property type="match status" value="1"/>
</dbReference>
<dbReference type="Pfam" id="PF13921">
    <property type="entry name" value="Myb_DNA-bind_6"/>
    <property type="match status" value="1"/>
</dbReference>
<dbReference type="SMART" id="SM00717">
    <property type="entry name" value="SANT"/>
    <property type="match status" value="2"/>
</dbReference>
<dbReference type="SUPFAM" id="SSF46689">
    <property type="entry name" value="Homeodomain-like"/>
    <property type="match status" value="1"/>
</dbReference>
<dbReference type="PROSITE" id="PS51294">
    <property type="entry name" value="HTH_MYB"/>
    <property type="match status" value="2"/>
</dbReference>
<keyword id="KW-0025">Alternative splicing</keyword>
<keyword id="KW-0131">Cell cycle</keyword>
<keyword id="KW-0217">Developmental protein</keyword>
<keyword id="KW-0238">DNA-binding</keyword>
<keyword id="KW-0539">Nucleus</keyword>
<keyword id="KW-1185">Reference proteome</keyword>
<keyword id="KW-0677">Repeat</keyword>
<keyword id="KW-0678">Repressor</keyword>
<keyword id="KW-0346">Stress response</keyword>
<keyword id="KW-0804">Transcription</keyword>
<keyword id="KW-0805">Transcription regulation</keyword>
<gene>
    <name evidence="15" type="primary">MYB88</name>
    <name evidence="17" type="ordered locus">At2g02820</name>
    <name evidence="18" type="ORF">T20F6.4</name>
</gene>
<protein>
    <recommendedName>
        <fullName evidence="15">Transcription factor MYB88</fullName>
    </recommendedName>
    <alternativeName>
        <fullName evidence="15">Myb-related protein 88</fullName>
        <shortName evidence="15">AtMYB88</shortName>
    </alternativeName>
</protein>
<organism>
    <name type="scientific">Arabidopsis thaliana</name>
    <name type="common">Mouse-ear cress</name>
    <dbReference type="NCBI Taxonomy" id="3702"/>
    <lineage>
        <taxon>Eukaryota</taxon>
        <taxon>Viridiplantae</taxon>
        <taxon>Streptophyta</taxon>
        <taxon>Embryophyta</taxon>
        <taxon>Tracheophyta</taxon>
        <taxon>Spermatophyta</taxon>
        <taxon>Magnoliopsida</taxon>
        <taxon>eudicotyledons</taxon>
        <taxon>Gunneridae</taxon>
        <taxon>Pentapetalae</taxon>
        <taxon>rosids</taxon>
        <taxon>malvids</taxon>
        <taxon>Brassicales</taxon>
        <taxon>Brassicaceae</taxon>
        <taxon>Camelineae</taxon>
        <taxon>Arabidopsis</taxon>
    </lineage>
</organism>
<comment type="function">
    <text evidence="4 5 6 7 8 9 10 11 13 14">Transcription factor that binds to DNA in promoters cis-regulatory element 5'-GGCGCGC-3' of cell cycle genes, including cyclins, cyclin-dependent kinases (CDKs), and components of the pre-replication complex (PubMed:20675570, PubMed:24687979). Binds to DNA in promoters cis-regulatory element 5'-AGCCG-3' of auxin regulated genes (e.g. PIN3 and PIN7) (PubMed:26578169). Together with FAMA and MYB124, ensures that stomata contain just two guard cells (GCs) by enforcing a single symmetric precursor cell division before stomatal maturity (PubMed:24571519). Represses the expression of the mitosis-inducing factors CDKB1-1 and CDKA-1, specifically required for the last guard mother cells (GMC) symmetric divisions in the stomatal pathway (PubMed:20675570, PubMed:24687979). Represses CYCA2-3 in newly formed guard cells (PubMed:21772250). Together with MYB88, regulates stomata spacing by restricting divisions late in the stomatal cell lineage thus limiting the number of GMC divisions (PubMed:16155180). In collaboration with CDKB1-1 and CDKB1-2, restrict the G1/S transition and chloroplast and nuclear number during stomatal formation, and normally maintain fate and developmental progression throughout the stomatal cell lineage (PubMed:24123248). Involved in sensing and/or transducing abiotic stress (e.g. drought and salt), probably via the positive regulation of NAC019 (PubMed:21105921). Regulates female reproduction being required for entry into megasporogenesis, probably via the regulation of cell cycle genes (PubMed:22915737). Plays a minor role in lateral roots (LRs) initiation (PubMed:26578065). Involved complementarily in establishing the gravitropic set-point angles of lateral roots by regulating the transcription of PIN3 and PIN7 in gravity-sensing cells of primary and lateral roots (PubMed:26578169).</text>
</comment>
<comment type="subunit">
    <text evidence="10">Interacts with RBR1.</text>
</comment>
<comment type="subcellular location">
    <subcellularLocation>
        <location evidence="1 5">Nucleus</location>
    </subcellularLocation>
</comment>
<comment type="alternative products">
    <event type="alternative splicing"/>
    <isoform>
        <id>F4IRB4-1</id>
        <name>1</name>
        <sequence type="displayed"/>
    </isoform>
    <isoform>
        <id>F4IRB4-2</id>
        <name>2</name>
        <sequence type="described" ref="VSP_058732 VSP_058733"/>
    </isoform>
    <isoform>
        <id>F4IRB4-3</id>
        <name>3</name>
        <sequence type="described" ref="VSP_058731"/>
    </isoform>
</comment>
<comment type="tissue specificity">
    <text evidence="4 12">Expressed at low levels in all organs including roots, leaves, hypocotyls stems, flowers, siliques and buds.</text>
</comment>
<comment type="developmental stage">
    <text evidence="8 12 14">Accumulates during ovule development. Detected at low levels in ovules and in the embryo sac of stage 13 flowers (PubMed:22915737). Not detected during embryo development. In seedlings and young plants, present in some spots (presumably stomata) in cotyledons and later in veins of hypocotyls as well as of petioles, hydathodes, stipules, in roots and lateral root primordia, and in the lower halves of first leaves. Detected in the phloem, as well as in the cortex of inflorescence stems. In roots, confined in developing xylem cells in the part of the differentiation zone with well-developed root hairs (PubMed:26391711). Present in lateral root tips and subsequently in a larger area. Accumulates in columella cells of lateral roots (PubMed:26578169). Expressed at the base of developing flowers, including ovaries. In flowers, detected in parts of the major stem axis, and in the anther at some stages of development, present in veins of sepals and accumulates progressively in ovaries, filaments, receptacles, and ovules. Also detected in the valve margins and receptacles of siliques and at the joint between the stigma and the style, as well as in the tapetum around pollen grains in maturing anthers (PubMed:26391711).</text>
</comment>
<comment type="disruption phenotype">
    <text evidence="4 5 6 7 8 9 11 13 14">Double mutants flp-7 myb88 and flp-1 myb88 have strong defects in stomata repartition with large stomatal clusters formation (PubMed:16155180). Increased accumulation of CDKB1-1 in the double mutant flp-1 myb88 (PubMed:20675570). Double mutants flp-1 myb88 have increased susceptibility to drought and high salt (NaCl), as well as increased rates of water loss; these phenotypes are associated with reduced accumulation of many typical abiotic stress gene transcripts. Lower stomatal closure in response to abscisic acid (ABA) treatment (PubMed:21105921). Accumulation of CYCA2-3 in newly formed guard cells in flp-1 myb88 double mutant (PubMed:21772250). The double mutants flp-1 myb88 and flp-7 myb88 treated with oryzalin, a microtubule depolymerizing drug, exhibit round-to-oval-shaped single guard cells (sGCs) associated with increased DNA content due to endoreplication leading to 10C DNA levels. The quadruple mutant flp-1 myb88 cdkb1;1 cdkb1;2 has a reduced number of large single guard cells blocked at mitosis, with strongly altered shape and size and characterized by enlarged nucleus due to endomitosis and endocycling, as well as extensive chloroplast replication (PubMed:24123248). Triple mutants cdka;1 flp-1 myb88 don't have guard cells stacks but accumulates sGCs. Accumulation of CDKA-1 in the double mutant flp-1 myb88 (PubMed:24687979). Increased number of ovules produced by the placenta but reduced female fertility due to defective meiotic entry and progression, and subsequent altered embryo sac development, thus leading to reduced seed set (PubMed:22915737). The double mutants flp-1 myb88 and flp-7 myb88 lack lateral roots with reduced PIN3 levels (PubMed:26578065). Abnormal gravitropic set-point angles (lower than 30 degree) of lateral roots (PubMed:26578169).</text>
</comment>
<proteinExistence type="evidence at protein level"/>
<evidence type="ECO:0000255" key="1">
    <source>
        <dbReference type="PROSITE-ProRule" id="PRU00625"/>
    </source>
</evidence>
<evidence type="ECO:0000255" key="2">
    <source>
        <dbReference type="PROSITE-ProRule" id="PRU00768"/>
    </source>
</evidence>
<evidence type="ECO:0000256" key="3">
    <source>
        <dbReference type="SAM" id="MobiDB-lite"/>
    </source>
</evidence>
<evidence type="ECO:0000269" key="4">
    <source>
    </source>
</evidence>
<evidence type="ECO:0000269" key="5">
    <source>
    </source>
</evidence>
<evidence type="ECO:0000269" key="6">
    <source>
    </source>
</evidence>
<evidence type="ECO:0000269" key="7">
    <source>
    </source>
</evidence>
<evidence type="ECO:0000269" key="8">
    <source>
    </source>
</evidence>
<evidence type="ECO:0000269" key="9">
    <source>
    </source>
</evidence>
<evidence type="ECO:0000269" key="10">
    <source>
    </source>
</evidence>
<evidence type="ECO:0000269" key="11">
    <source>
    </source>
</evidence>
<evidence type="ECO:0000269" key="12">
    <source>
    </source>
</evidence>
<evidence type="ECO:0000269" key="13">
    <source>
    </source>
</evidence>
<evidence type="ECO:0000269" key="14">
    <source>
    </source>
</evidence>
<evidence type="ECO:0000303" key="15">
    <source>
    </source>
</evidence>
<evidence type="ECO:0000305" key="16"/>
<evidence type="ECO:0000312" key="17">
    <source>
        <dbReference type="Araport" id="AT2G02820"/>
    </source>
</evidence>
<evidence type="ECO:0000312" key="18">
    <source>
        <dbReference type="EMBL" id="AAC05340.2"/>
    </source>
</evidence>
<name>MYB88_ARATH</name>